<keyword id="KW-0175">Coiled coil</keyword>
<keyword id="KW-0539">Nucleus</keyword>
<keyword id="KW-1185">Reference proteome</keyword>
<keyword id="KW-0698">rRNA processing</keyword>
<accession>Q59NQ9</accession>
<accession>A0A1D8PN60</accession>
<protein>
    <recommendedName>
        <fullName>rRNA-processing protein FYV7</fullName>
    </recommendedName>
</protein>
<gene>
    <name type="primary">FYV7</name>
    <name type="ordered locus">CAALFM_C501480WA</name>
    <name type="ORF">CaO19.11619</name>
    <name type="ORF">CaO19.4143</name>
</gene>
<reference key="1">
    <citation type="journal article" date="2004" name="Proc. Natl. Acad. Sci. U.S.A.">
        <title>The diploid genome sequence of Candida albicans.</title>
        <authorList>
            <person name="Jones T."/>
            <person name="Federspiel N.A."/>
            <person name="Chibana H."/>
            <person name="Dungan J."/>
            <person name="Kalman S."/>
            <person name="Magee B.B."/>
            <person name="Newport G."/>
            <person name="Thorstenson Y.R."/>
            <person name="Agabian N."/>
            <person name="Magee P.T."/>
            <person name="Davis R.W."/>
            <person name="Scherer S."/>
        </authorList>
    </citation>
    <scope>NUCLEOTIDE SEQUENCE [LARGE SCALE GENOMIC DNA]</scope>
    <source>
        <strain>SC5314 / ATCC MYA-2876</strain>
    </source>
</reference>
<reference key="2">
    <citation type="journal article" date="2007" name="Genome Biol.">
        <title>Assembly of the Candida albicans genome into sixteen supercontigs aligned on the eight chromosomes.</title>
        <authorList>
            <person name="van het Hoog M."/>
            <person name="Rast T.J."/>
            <person name="Martchenko M."/>
            <person name="Grindle S."/>
            <person name="Dignard D."/>
            <person name="Hogues H."/>
            <person name="Cuomo C."/>
            <person name="Berriman M."/>
            <person name="Scherer S."/>
            <person name="Magee B.B."/>
            <person name="Whiteway M."/>
            <person name="Chibana H."/>
            <person name="Nantel A."/>
            <person name="Magee P.T."/>
        </authorList>
    </citation>
    <scope>GENOME REANNOTATION</scope>
    <source>
        <strain>SC5314 / ATCC MYA-2876</strain>
    </source>
</reference>
<reference key="3">
    <citation type="journal article" date="2013" name="Genome Biol.">
        <title>Assembly of a phased diploid Candida albicans genome facilitates allele-specific measurements and provides a simple model for repeat and indel structure.</title>
        <authorList>
            <person name="Muzzey D."/>
            <person name="Schwartz K."/>
            <person name="Weissman J.S."/>
            <person name="Sherlock G."/>
        </authorList>
    </citation>
    <scope>NUCLEOTIDE SEQUENCE [LARGE SCALE GENOMIC DNA]</scope>
    <scope>GENOME REANNOTATION</scope>
    <source>
        <strain>SC5314 / ATCC MYA-2876</strain>
    </source>
</reference>
<proteinExistence type="inferred from homology"/>
<sequence length="142" mass="16786">MHPNNKNSFKSKKKFIDRREAKSQDIKRALTHRARLRKNYFKLLEKEGLQEEGKPEDENDIRPTKKKGINFEERAAIVKQRKEEKRKFKLASVQAKLEKIESNSKERALKREQLKKSTTKGQPLMGPRINDLLDKIKKNEMS</sequence>
<name>FYV7_CANAL</name>
<dbReference type="EMBL" id="CP017627">
    <property type="protein sequence ID" value="AOW29581.1"/>
    <property type="molecule type" value="Genomic_DNA"/>
</dbReference>
<dbReference type="SMR" id="Q59NQ9"/>
<dbReference type="FunCoup" id="Q59NQ9">
    <property type="interactions" value="99"/>
</dbReference>
<dbReference type="STRING" id="237561.Q59NQ9"/>
<dbReference type="EnsemblFungi" id="C5_01480W_A-T">
    <property type="protein sequence ID" value="C5_01480W_A-T-p1"/>
    <property type="gene ID" value="C5_01480W_A"/>
</dbReference>
<dbReference type="KEGG" id="cal:CAALFM_C501480WA"/>
<dbReference type="CGD" id="CAL0000198911">
    <property type="gene designation" value="FYV5"/>
</dbReference>
<dbReference type="VEuPathDB" id="FungiDB:C5_01480W_A"/>
<dbReference type="eggNOG" id="KOG4851">
    <property type="taxonomic scope" value="Eukaryota"/>
</dbReference>
<dbReference type="HOGENOM" id="CLU_105541_0_0_1"/>
<dbReference type="InParanoid" id="Q59NQ9"/>
<dbReference type="OMA" id="MGPKIDD"/>
<dbReference type="OrthoDB" id="2135053at2759"/>
<dbReference type="PRO" id="PR:Q59NQ9"/>
<dbReference type="Proteomes" id="UP000000559">
    <property type="component" value="Chromosome 5"/>
</dbReference>
<dbReference type="GO" id="GO:0005730">
    <property type="term" value="C:nucleolus"/>
    <property type="evidence" value="ECO:0007669"/>
    <property type="project" value="UniProtKB-SubCell"/>
</dbReference>
<dbReference type="GO" id="GO:0006364">
    <property type="term" value="P:rRNA processing"/>
    <property type="evidence" value="ECO:0007669"/>
    <property type="project" value="UniProtKB-KW"/>
</dbReference>
<dbReference type="InterPro" id="IPR013730">
    <property type="entry name" value="Fyv7/TAP26"/>
</dbReference>
<dbReference type="InterPro" id="IPR017265">
    <property type="entry name" value="Fyv7_fungi"/>
</dbReference>
<dbReference type="Pfam" id="PF08524">
    <property type="entry name" value="rRNA_processing"/>
    <property type="match status" value="1"/>
</dbReference>
<dbReference type="PIRSF" id="PIRSF037708">
    <property type="entry name" value="rRNA_proc_FYV7"/>
    <property type="match status" value="1"/>
</dbReference>
<organism>
    <name type="scientific">Candida albicans (strain SC5314 / ATCC MYA-2876)</name>
    <name type="common">Yeast</name>
    <dbReference type="NCBI Taxonomy" id="237561"/>
    <lineage>
        <taxon>Eukaryota</taxon>
        <taxon>Fungi</taxon>
        <taxon>Dikarya</taxon>
        <taxon>Ascomycota</taxon>
        <taxon>Saccharomycotina</taxon>
        <taxon>Pichiomycetes</taxon>
        <taxon>Debaryomycetaceae</taxon>
        <taxon>Candida/Lodderomyces clade</taxon>
        <taxon>Candida</taxon>
    </lineage>
</organism>
<feature type="chain" id="PRO_0000087399" description="rRNA-processing protein FYV7">
    <location>
        <begin position="1"/>
        <end position="142"/>
    </location>
</feature>
<feature type="region of interest" description="Disordered" evidence="3">
    <location>
        <begin position="1"/>
        <end position="23"/>
    </location>
</feature>
<feature type="region of interest" description="Disordered" evidence="3">
    <location>
        <begin position="47"/>
        <end position="67"/>
    </location>
</feature>
<feature type="region of interest" description="Disordered" evidence="3">
    <location>
        <begin position="99"/>
        <end position="142"/>
    </location>
</feature>
<feature type="coiled-coil region" evidence="2">
    <location>
        <begin position="94"/>
        <end position="116"/>
    </location>
</feature>
<feature type="compositionally biased region" description="Basic and acidic residues" evidence="3">
    <location>
        <begin position="99"/>
        <end position="115"/>
    </location>
</feature>
<feature type="compositionally biased region" description="Basic and acidic residues" evidence="3">
    <location>
        <begin position="131"/>
        <end position="142"/>
    </location>
</feature>
<comment type="function">
    <text evidence="1">Involved in the processing of the 20S pre-rRNA.</text>
</comment>
<comment type="subcellular location">
    <subcellularLocation>
        <location evidence="1">Nucleus</location>
        <location evidence="1">Nucleolus</location>
    </subcellularLocation>
</comment>
<comment type="similarity">
    <text evidence="4">Belongs to the FYV7 family.</text>
</comment>
<evidence type="ECO:0000250" key="1"/>
<evidence type="ECO:0000255" key="2"/>
<evidence type="ECO:0000256" key="3">
    <source>
        <dbReference type="SAM" id="MobiDB-lite"/>
    </source>
</evidence>
<evidence type="ECO:0000305" key="4"/>